<proteinExistence type="evidence at protein level"/>
<keyword id="KW-0002">3D-structure</keyword>
<keyword id="KW-0046">Antibiotic resistance</keyword>
<keyword id="KW-0997">Cell inner membrane</keyword>
<keyword id="KW-1003">Cell membrane</keyword>
<keyword id="KW-1015">Disulfide bond</keyword>
<keyword id="KW-0472">Membrane</keyword>
<keyword id="KW-0479">Metal-binding</keyword>
<keyword id="KW-0597">Phosphoprotein</keyword>
<keyword id="KW-0614">Plasmid</keyword>
<keyword id="KW-0808">Transferase</keyword>
<keyword id="KW-0812">Transmembrane</keyword>
<keyword id="KW-1133">Transmembrane helix</keyword>
<keyword id="KW-0862">Zinc</keyword>
<comment type="function">
    <text evidence="2 5">Probably catalyzes the addition of a phosphoethanolamine moiety to lipid A (PubMed:26603172, PubMed:29079699). Phosphoethanolamine modification of lipid A confers polymyxin resistance (PubMed:26603172). Confers resistance to polymyxin-type antibiotics such as colistin; in the E.coli strain W3110 (PubMed:26603172).</text>
</comment>
<comment type="catalytic activity">
    <reaction evidence="9">
        <text>lipid A (E. coli) + a 1,2-diacyl-sn-glycero-3-phosphoethanolamine + H(+) = lipid A 4'-(2-aminoethyl diphosphate) (E. coli) + a 1,2-diacyl-sn-glycerol</text>
        <dbReference type="Rhea" id="RHEA:46900"/>
        <dbReference type="ChEBI" id="CHEBI:15378"/>
        <dbReference type="ChEBI" id="CHEBI:17815"/>
        <dbReference type="ChEBI" id="CHEBI:64612"/>
        <dbReference type="ChEBI" id="CHEBI:87097"/>
        <dbReference type="ChEBI" id="CHEBI:134257"/>
        <dbReference type="EC" id="2.7.8.43"/>
    </reaction>
</comment>
<comment type="activity regulation">
    <text evidence="4 5">EDTA may inhibit activity (PubMed:28059088). May be inhibited by ethanolamine (PubMed:29079699).</text>
</comment>
<comment type="subunit">
    <text evidence="4">Monomer.</text>
</comment>
<comment type="subcellular location">
    <subcellularLocation>
        <location evidence="3">Cell inner membrane</location>
        <topology evidence="1">Multi-pass membrane protein</topology>
    </subcellularLocation>
</comment>
<comment type="PTM">
    <text evidence="3 4">Phosphorylated at Thr-285; may represent an intermediate in the catalytic mechanism.</text>
</comment>
<comment type="miscellaneous">
    <text evidence="2">This is the first (November 2015) reported plasmid-mediated resistance to polymyxin antibiotics; although it does not confer a high MIC it protects against colistin treatment in a mouse infection model (PubMed:26603172). Colistin is one of the last-resort antibiotics available for multidrug-resistant Gram-negative bacteria such as K.pneumoniae, P.aeruginosa and Acinetobacter. First identified from a pig farm in Shanghai, China in July 2013, retrospective screening detects the gene in (slowly) increasing proportions between 2011 and 2015 from pigs and chickens, and also in hospitalized patients in China. Colistin is very widely used in veterinary agriculture (PubMed:26603172). The pHNSHP45 plasmid can transfer efficiently to other E.coli strains by conjugation and increases polymxin MIC by 8- to 16-fold; it may not require selective pressure to be maintained in the cell. When transformed into K.pneumoniae or P.aeruginosa it also increases polymxin MIC 8- to 16-fold (PubMed:26603172).</text>
</comment>
<comment type="similarity">
    <text evidence="7">Belongs to the phosphoethanolamine transferase family.</text>
</comment>
<geneLocation type="plasmid">
    <name>pHNSHP45</name>
</geneLocation>
<evidence type="ECO:0000255" key="1"/>
<evidence type="ECO:0000269" key="2">
    <source>
    </source>
</evidence>
<evidence type="ECO:0000269" key="3">
    <source>
    </source>
</evidence>
<evidence type="ECO:0000269" key="4">
    <source>
    </source>
</evidence>
<evidence type="ECO:0000269" key="5">
    <source>
    </source>
</evidence>
<evidence type="ECO:0000303" key="6">
    <source>
    </source>
</evidence>
<evidence type="ECO:0000305" key="7"/>
<evidence type="ECO:0000305" key="8">
    <source>
    </source>
</evidence>
<evidence type="ECO:0000305" key="9">
    <source>
    </source>
</evidence>
<evidence type="ECO:0007744" key="10">
    <source>
        <dbReference type="PDB" id="5GOV"/>
    </source>
</evidence>
<evidence type="ECO:0007744" key="11">
    <source>
        <dbReference type="PDB" id="5GRR"/>
    </source>
</evidence>
<evidence type="ECO:0007744" key="12">
    <source>
        <dbReference type="PDB" id="5K4P"/>
    </source>
</evidence>
<evidence type="ECO:0007744" key="13">
    <source>
        <dbReference type="PDB" id="5LRM"/>
    </source>
</evidence>
<evidence type="ECO:0007744" key="14">
    <source>
        <dbReference type="PDB" id="5LRN"/>
    </source>
</evidence>
<evidence type="ECO:0007744" key="15">
    <source>
        <dbReference type="PDB" id="5YLC"/>
    </source>
</evidence>
<evidence type="ECO:0007744" key="16">
    <source>
        <dbReference type="PDB" id="5YLE"/>
    </source>
</evidence>
<evidence type="ECO:0007744" key="17">
    <source>
        <dbReference type="PDB" id="5YLF"/>
    </source>
</evidence>
<evidence type="ECO:0007744" key="18">
    <source>
        <dbReference type="PDB" id="5ZJV"/>
    </source>
</evidence>
<evidence type="ECO:0007744" key="19">
    <source>
        <dbReference type="PDB" id="6LI4"/>
    </source>
</evidence>
<evidence type="ECO:0007829" key="20">
    <source>
        <dbReference type="PDB" id="5K4P"/>
    </source>
</evidence>
<dbReference type="EC" id="2.7.8.43" evidence="9"/>
<dbReference type="EMBL" id="KP347127">
    <property type="protein sequence ID" value="AKF16168.1"/>
    <property type="molecule type" value="Genomic_DNA"/>
</dbReference>
<dbReference type="EMBL" id="LMBK01000308">
    <property type="protein sequence ID" value="KST31405.1"/>
    <property type="molecule type" value="Genomic_DNA"/>
</dbReference>
<dbReference type="RefSeq" id="WP_049589868.1">
    <property type="nucleotide sequence ID" value="NZ_WVWF01000026.1"/>
</dbReference>
<dbReference type="PDB" id="5GOV">
    <property type="method" value="X-ray"/>
    <property type="resolution" value="2.33 A"/>
    <property type="chains" value="A/B=200-541"/>
</dbReference>
<dbReference type="PDB" id="5GRR">
    <property type="method" value="X-ray"/>
    <property type="resolution" value="1.45 A"/>
    <property type="chains" value="A=219-541"/>
</dbReference>
<dbReference type="PDB" id="5K4P">
    <property type="method" value="X-ray"/>
    <property type="resolution" value="1.32 A"/>
    <property type="chains" value="A=214-541"/>
</dbReference>
<dbReference type="PDB" id="5LRM">
    <property type="method" value="X-ray"/>
    <property type="resolution" value="1.75 A"/>
    <property type="chains" value="A=219-541"/>
</dbReference>
<dbReference type="PDB" id="5LRN">
    <property type="method" value="X-ray"/>
    <property type="resolution" value="1.55 A"/>
    <property type="chains" value="A/B=219-541"/>
</dbReference>
<dbReference type="PDB" id="5YLC">
    <property type="method" value="X-ray"/>
    <property type="resolution" value="1.50 A"/>
    <property type="chains" value="A=216-541"/>
</dbReference>
<dbReference type="PDB" id="5YLE">
    <property type="method" value="X-ray"/>
    <property type="resolution" value="1.85 A"/>
    <property type="chains" value="A=216-541"/>
</dbReference>
<dbReference type="PDB" id="5YLF">
    <property type="method" value="X-ray"/>
    <property type="resolution" value="1.50 A"/>
    <property type="chains" value="A=216-541"/>
</dbReference>
<dbReference type="PDB" id="5ZJV">
    <property type="method" value="X-ray"/>
    <property type="resolution" value="1.82 A"/>
    <property type="chains" value="A=216-541"/>
</dbReference>
<dbReference type="PDB" id="6LI4">
    <property type="method" value="X-ray"/>
    <property type="resolution" value="1.78 A"/>
    <property type="chains" value="A/B=219-541"/>
</dbReference>
<dbReference type="PDB" id="6LI5">
    <property type="method" value="X-ray"/>
    <property type="resolution" value="1.82 A"/>
    <property type="chains" value="A/B=219-541"/>
</dbReference>
<dbReference type="PDB" id="6LI6">
    <property type="method" value="X-ray"/>
    <property type="resolution" value="1.68 A"/>
    <property type="chains" value="A/B=219-541"/>
</dbReference>
<dbReference type="PDB" id="7WAA">
    <property type="method" value="X-ray"/>
    <property type="resolution" value="1.58 A"/>
    <property type="chains" value="A/B=219-541"/>
</dbReference>
<dbReference type="PDB" id="7YJP">
    <property type="method" value="X-ray"/>
    <property type="resolution" value="1.88 A"/>
    <property type="chains" value="A/B=219-541"/>
</dbReference>
<dbReference type="PDB" id="7YJQ">
    <property type="method" value="X-ray"/>
    <property type="resolution" value="1.60 A"/>
    <property type="chains" value="A/B=219-541"/>
</dbReference>
<dbReference type="PDB" id="7YJR">
    <property type="method" value="X-ray"/>
    <property type="resolution" value="2.30 A"/>
    <property type="chains" value="A/B=219-541"/>
</dbReference>
<dbReference type="PDB" id="7YJS">
    <property type="method" value="X-ray"/>
    <property type="resolution" value="2.50 A"/>
    <property type="chains" value="A/B=219-541"/>
</dbReference>
<dbReference type="PDB" id="7YJT">
    <property type="method" value="X-ray"/>
    <property type="resolution" value="2.10 A"/>
    <property type="chains" value="A/B=219-541"/>
</dbReference>
<dbReference type="PDBsum" id="5GOV"/>
<dbReference type="PDBsum" id="5GRR"/>
<dbReference type="PDBsum" id="5K4P"/>
<dbReference type="PDBsum" id="5LRM"/>
<dbReference type="PDBsum" id="5LRN"/>
<dbReference type="PDBsum" id="5YLC"/>
<dbReference type="PDBsum" id="5YLE"/>
<dbReference type="PDBsum" id="5YLF"/>
<dbReference type="PDBsum" id="5ZJV"/>
<dbReference type="PDBsum" id="6LI4"/>
<dbReference type="PDBsum" id="6LI5"/>
<dbReference type="PDBsum" id="6LI6"/>
<dbReference type="PDBsum" id="7WAA"/>
<dbReference type="PDBsum" id="7YJP"/>
<dbReference type="PDBsum" id="7YJQ"/>
<dbReference type="PDBsum" id="7YJR"/>
<dbReference type="PDBsum" id="7YJS"/>
<dbReference type="PDBsum" id="7YJT"/>
<dbReference type="SMR" id="A0A0R6L508"/>
<dbReference type="CARD" id="ARO:3003689">
    <property type="molecule name" value="MCR-1.1"/>
    <property type="mechanism identifier" value="ARO:0001001"/>
    <property type="mechanism name" value="antibiotic target alteration"/>
</dbReference>
<dbReference type="CARD" id="ARO:3007280">
    <property type="molecule name" value="MCR-1.26"/>
    <property type="mechanism identifier" value="ARO:0001001"/>
    <property type="mechanism name" value="antibiotic target alteration"/>
</dbReference>
<dbReference type="BRENDA" id="2.7.8.43">
    <property type="organism ID" value="2026"/>
</dbReference>
<dbReference type="PHI-base" id="PHI:11668"/>
<dbReference type="GO" id="GO:0005886">
    <property type="term" value="C:plasma membrane"/>
    <property type="evidence" value="ECO:0007669"/>
    <property type="project" value="UniProtKB-SubCell"/>
</dbReference>
<dbReference type="GO" id="GO:0016776">
    <property type="term" value="F:phosphotransferase activity, phosphate group as acceptor"/>
    <property type="evidence" value="ECO:0007669"/>
    <property type="project" value="TreeGrafter"/>
</dbReference>
<dbReference type="GO" id="GO:0009244">
    <property type="term" value="P:lipopolysaccharide core region biosynthetic process"/>
    <property type="evidence" value="ECO:0007669"/>
    <property type="project" value="TreeGrafter"/>
</dbReference>
<dbReference type="GO" id="GO:0046677">
    <property type="term" value="P:response to antibiotic"/>
    <property type="evidence" value="ECO:0007669"/>
    <property type="project" value="UniProtKB-KW"/>
</dbReference>
<dbReference type="CDD" id="cd16017">
    <property type="entry name" value="LptA"/>
    <property type="match status" value="1"/>
</dbReference>
<dbReference type="Gene3D" id="3.40.720.10">
    <property type="entry name" value="Alkaline Phosphatase, subunit A"/>
    <property type="match status" value="1"/>
</dbReference>
<dbReference type="InterPro" id="IPR017850">
    <property type="entry name" value="Alkaline_phosphatase_core_sf"/>
</dbReference>
<dbReference type="InterPro" id="IPR012549">
    <property type="entry name" value="EptA-like_N"/>
</dbReference>
<dbReference type="InterPro" id="IPR040423">
    <property type="entry name" value="PEA_transferase"/>
</dbReference>
<dbReference type="InterPro" id="IPR000917">
    <property type="entry name" value="Sulfatase_N"/>
</dbReference>
<dbReference type="NCBIfam" id="NF028537">
    <property type="entry name" value="P_eth_NH2_trans"/>
    <property type="match status" value="1"/>
</dbReference>
<dbReference type="NCBIfam" id="NF000465">
    <property type="entry name" value="polymyxin_MCR1"/>
    <property type="match status" value="1"/>
</dbReference>
<dbReference type="PANTHER" id="PTHR30443">
    <property type="entry name" value="INNER MEMBRANE PROTEIN"/>
    <property type="match status" value="1"/>
</dbReference>
<dbReference type="PANTHER" id="PTHR30443:SF0">
    <property type="entry name" value="PHOSPHOETHANOLAMINE TRANSFERASE EPTA"/>
    <property type="match status" value="1"/>
</dbReference>
<dbReference type="Pfam" id="PF08019">
    <property type="entry name" value="EptA_B_N"/>
    <property type="match status" value="1"/>
</dbReference>
<dbReference type="Pfam" id="PF00884">
    <property type="entry name" value="Sulfatase"/>
    <property type="match status" value="1"/>
</dbReference>
<dbReference type="SUPFAM" id="SSF53649">
    <property type="entry name" value="Alkaline phosphatase-like"/>
    <property type="match status" value="1"/>
</dbReference>
<organism>
    <name type="scientific">Escherichia coli</name>
    <dbReference type="NCBI Taxonomy" id="562"/>
    <lineage>
        <taxon>Bacteria</taxon>
        <taxon>Pseudomonadati</taxon>
        <taxon>Pseudomonadota</taxon>
        <taxon>Gammaproteobacteria</taxon>
        <taxon>Enterobacterales</taxon>
        <taxon>Enterobacteriaceae</taxon>
        <taxon>Escherichia</taxon>
    </lineage>
</organism>
<sequence>MMQHTSVWYRRSVSPFVLVASVAVFLTATANLTFFDKISQTYPIADNLGFVLTIAVVLFGAMLLITTLLSSYRYVLKPVLILLLIMGAVTSYFTDTYGTVYDTTMLQNALQTDQAETKDLLNAAFIMRIIGLGVLPSLLVAFVKVDYPTWGKGLMRRLGLIVASLALILLPVVAFSSHYASFFRVHKPLRSYVNPIMPIYSVGKLASIEYKKASAPKDTIYHAKDAVQATKPDMRKPRLVVFVVGETARADHVSFNGYERDTFPQLAKIDGVTNFSNVTSCGTSTAYSVPCMFSYLGADEYDVDTAKYQENVLDTLDRLGVSILWRDNNSDSKGVMDKLPKAQFADYKSATNNAICNTNPYNECRDVGMLVGLDDFVAANNGKDMLIMLHQMGNHGPAYFKRYDEKFAKFTPVCEGNELAKCEHQSLINAYDNALLATDDFIAQSIQWLQTHSNAYDVSMLYVSDHGESLGENGVYLHGMPNAFAPKEQRSVPAFFWTDKQTGITPMATDTVLTHDAITPTLLKLFDVTADKVKDRTAFIR</sequence>
<reference key="1">
    <citation type="journal article" date="2016" name="Lancet Infect. Dis.">
        <title>Emergence of plasmid-mediated colistin resistance mechanism MCR-1 in animals and human beings in China: a microbiological and molecular biological study.</title>
        <authorList>
            <person name="Liu Y.Y."/>
            <person name="Wang Y."/>
            <person name="Walsh T.R."/>
            <person name="Yi L.X."/>
            <person name="Zhang R."/>
            <person name="Spencer J."/>
            <person name="Doi Y."/>
            <person name="Tian G."/>
            <person name="Dong B."/>
            <person name="Huang X."/>
            <person name="Yu L.F."/>
            <person name="Gu D."/>
            <person name="Ren H."/>
            <person name="Chen X."/>
            <person name="Lv L."/>
            <person name="He D."/>
            <person name="Zhou H."/>
            <person name="Liang Z."/>
            <person name="Liu J.H."/>
            <person name="Shen J."/>
        </authorList>
    </citation>
    <scope>NUCLEOTIDE SEQUENCE [GENOMIC DNA]</scope>
    <scope>FUNCTION</scope>
    <scope>ANTIBIOTIC RESISTANCE</scope>
    <source>
        <strain>SHP45</strain>
    </source>
</reference>
<reference key="2">
    <citation type="journal article" date="2016" name="Genome Announc.">
        <title>Draft Genome Sequences of Enterohemorrhagic Escherichia coli Encoding Extended-Spectrum Beta-Lactamases.</title>
        <authorList>
            <person name="Valat C."/>
            <person name="Goldstone R.J."/>
            <person name="Hirchaud E."/>
            <person name="Haenni M."/>
            <person name="Smith D.G."/>
            <person name="Madec J.Y."/>
        </authorList>
    </citation>
    <scope>NUCLEOTIDE SEQUENCE [LARGE SCALE GENOMIC DNA]</scope>
    <source>
        <strain>O151:H16 / 22593</strain>
    </source>
</reference>
<reference evidence="12" key="3">
    <citation type="journal article" date="2016" name="BMC Biol.">
        <title>Structure of the catalytic domain of the colistin resistance enzyme MCR-1.</title>
        <authorList>
            <person name="Stojanoski V."/>
            <person name="Sankaran B."/>
            <person name="Prasad B.V."/>
            <person name="Poirel L."/>
            <person name="Nordmann P."/>
            <person name="Palzkill T."/>
        </authorList>
    </citation>
    <scope>X-RAY CRYSTALLOGRAPHY (1.32 ANGSTROMS) OF 214-541 IN COMPLEX WITH ZN(2+)</scope>
    <scope>SUBCELLULAR LOCATION</scope>
    <scope>PHOSPHORYLATION AT THR-285</scope>
    <scope>MUTAGENESIS OF THR-285</scope>
</reference>
<reference evidence="13 14" key="4">
    <citation type="journal article" date="2017" name="Sci. Rep.">
        <title>Insights into the Mechanistic Basis of Plasmid-Mediated Colistin Resistance from Crystal Structures of the Catalytic Domain of MCR-1.</title>
        <authorList>
            <person name="Hinchliffe P."/>
            <person name="Yang Q.E."/>
            <person name="Portal E."/>
            <person name="Young T."/>
            <person name="Li H."/>
            <person name="Tooke C.L."/>
            <person name="Carvalho M.J."/>
            <person name="Paterson N.G."/>
            <person name="Brem J."/>
            <person name="Niumsup P.R."/>
            <person name="Tansawai U."/>
            <person name="Lei L."/>
            <person name="Li M."/>
            <person name="Shen Z."/>
            <person name="Wang Y."/>
            <person name="Schofield C.J."/>
            <person name="Mulholland A.J."/>
            <person name="Shen J."/>
            <person name="Fey N."/>
            <person name="Walsh T.R."/>
            <person name="Spencer J."/>
        </authorList>
    </citation>
    <scope>X-RAY CRYSTALLOGRAPHY (1.55 ANGSTROMS) OF 219-541 IN COMPLEX WITH ZN(2+)</scope>
    <scope>ACTIVITY REGULATION</scope>
    <scope>SUBUNIT</scope>
    <scope>PHOSPHORYLATION AT THR-285</scope>
    <scope>MUTAGENESIS OF GLU-246; THR-285; LYS-333; HIS-395; GLU-468 AND HIS-478</scope>
</reference>
<reference evidence="15 16 17" key="5">
    <citation type="journal article" date="2018" name="FASEB J.">
        <title>Substrate analog interaction with MCR-1 offers insight into the rising threat of the plasmid-mediated transferable colistin resistance.</title>
        <authorList>
            <person name="Wei P."/>
            <person name="Song G."/>
            <person name="Shi M."/>
            <person name="Zhou Y."/>
            <person name="Liu Y."/>
            <person name="Lei J."/>
            <person name="Chen P."/>
            <person name="Yin L."/>
        </authorList>
    </citation>
    <scope>X-RAY CRYSTALLOGRAPHY (1.50 ANGSTROMS) OF 216-541 IN COMPLEXES WITH ZN(2+); ETHANOLAMINE OR D-GLUCOSE</scope>
    <scope>FUNCTION</scope>
    <scope>CATALYTIC ACTIVITY</scope>
    <scope>ACTIVITY REGULATION</scope>
    <scope>PHOSPHORYLATION AT THR-285</scope>
    <scope>MUTAGENESIS OF GLU-246; THR-285; ASN-329; LYS-333; HIS-395; ASP-465; HIS-466 AND HIS-478</scope>
</reference>
<protein>
    <recommendedName>
        <fullName evidence="8">Phosphatidylethanolamine transferase Mcr-1</fullName>
        <ecNumber evidence="9">2.7.8.43</ecNumber>
    </recommendedName>
    <alternativeName>
        <fullName evidence="6">Polymyxin resistance protein MCR-1</fullName>
    </alternativeName>
</protein>
<name>MCR1_ECOLX</name>
<accession>A0A0R6L508</accession>
<feature type="chain" id="PRO_0000435624" description="Phosphatidylethanolamine transferase Mcr-1">
    <location>
        <begin position="1"/>
        <end position="541"/>
    </location>
</feature>
<feature type="topological domain" description="Cytoplasmic" evidence="7">
    <location>
        <begin position="1"/>
        <end position="14"/>
    </location>
</feature>
<feature type="transmembrane region" description="Helical" evidence="1">
    <location>
        <begin position="15"/>
        <end position="35"/>
    </location>
</feature>
<feature type="topological domain" description="Periplasmic" evidence="7">
    <location>
        <begin position="36"/>
        <end position="47"/>
    </location>
</feature>
<feature type="transmembrane region" description="Helical" evidence="1">
    <location>
        <begin position="48"/>
        <end position="68"/>
    </location>
</feature>
<feature type="topological domain" description="Cytoplasmic" evidence="7">
    <location>
        <begin position="69"/>
        <end position="73"/>
    </location>
</feature>
<feature type="transmembrane region" description="Helical" evidence="1">
    <location>
        <begin position="74"/>
        <end position="94"/>
    </location>
</feature>
<feature type="topological domain" description="Periplasmic" evidence="7">
    <location>
        <begin position="95"/>
        <end position="122"/>
    </location>
</feature>
<feature type="transmembrane region" description="Helical" evidence="1">
    <location>
        <begin position="123"/>
        <end position="143"/>
    </location>
</feature>
<feature type="topological domain" description="Cytoplasmic" evidence="7">
    <location>
        <begin position="144"/>
        <end position="157"/>
    </location>
</feature>
<feature type="transmembrane region" description="Helical" evidence="1">
    <location>
        <begin position="158"/>
        <end position="178"/>
    </location>
</feature>
<feature type="topological domain" description="Periplasmic" evidence="7">
    <location>
        <begin position="179"/>
        <end position="541"/>
    </location>
</feature>
<feature type="binding site" evidence="3 4 5 10 11 12 13 14 15 16 17 18 19">
    <location>
        <position position="246"/>
    </location>
    <ligand>
        <name>Zn(2+)</name>
        <dbReference type="ChEBI" id="CHEBI:29105"/>
        <label>1</label>
    </ligand>
</feature>
<feature type="binding site" evidence="3 4 5 10 11 12 13 14 15 16 17 18 19">
    <location>
        <position position="285"/>
    </location>
    <ligand>
        <name>Zn(2+)</name>
        <dbReference type="ChEBI" id="CHEBI:29105"/>
        <label>1</label>
    </ligand>
</feature>
<feature type="binding site" evidence="3 4 5 10 11 12 13 14 15 16 17 18 19">
    <location>
        <position position="465"/>
    </location>
    <ligand>
        <name>Zn(2+)</name>
        <dbReference type="ChEBI" id="CHEBI:29105"/>
        <label>1</label>
    </ligand>
</feature>
<feature type="binding site" evidence="3 4 5 10 11 12 13 14 15 16 17 18 19">
    <location>
        <position position="466"/>
    </location>
    <ligand>
        <name>Zn(2+)</name>
        <dbReference type="ChEBI" id="CHEBI:29105"/>
        <label>1</label>
    </ligand>
</feature>
<feature type="modified residue" description="Phosphothreonine" evidence="3 4">
    <location>
        <position position="285"/>
    </location>
</feature>
<feature type="disulfide bond" evidence="3 12">
    <location>
        <begin position="281"/>
        <end position="291"/>
    </location>
</feature>
<feature type="disulfide bond" evidence="3 12">
    <location>
        <begin position="356"/>
        <end position="364"/>
    </location>
</feature>
<feature type="disulfide bond" evidence="3 12">
    <location>
        <begin position="414"/>
        <end position="422"/>
    </location>
</feature>
<feature type="mutagenesis site" description="Abolishes transfer of phosphoethanolamine (PEA) to a lipid A analog in vitro. Almost abolishes resistance of E.coli strains Rosetta or TOP10 to colistin and polymyxin B, by comparison with the same strain expressing wild-type mcr-1. Does not affect expression or membrane localization in E.coli strain BL21(DE3)." evidence="4 5">
    <original>E</original>
    <variation>A</variation>
    <location>
        <position position="246"/>
    </location>
</feature>
<feature type="mutagenesis site" description="Abolishes transfer of phosphoethanolamine (PEA) to a lipid A analog in vitro. Almost abolishes resistance of E.coli strains BL21(DE3), Rosetta or TOP10 to colistin and polymyxin B, by comparison with the same strain expressing wild-type mcr-1. Does not affect expression or membrane localization in E.coli strain BL21(DE3)." evidence="3 4 5">
    <original>T</original>
    <variation>A</variation>
    <location>
        <position position="285"/>
    </location>
</feature>
<feature type="mutagenesis site" description="Abolishes transfer of phosphoethanolamine (PEA) to a lipid A analog in vitro. Almost abolishes resistance of E.coli strain Rosetta to polymyxin B, by comparison with the same strain expressing wild-type mcr-1. Does not affect expression or membrane localization in E.coli strain Rosetta." evidence="5">
    <original>N</original>
    <variation>A</variation>
    <location>
        <position position="329"/>
    </location>
</feature>
<feature type="mutagenesis site" description="Abolishes transfer of phosphoethanolamine (PEA) to a lipid A analog in vitro. Almost abolishes resistance of E.coli strains Rosetta or TOP10 to colistin and polymyxin B, by comparison with the same strain expressing wild-type mcr-1. Does not affect expression or membrane localization in E.coli strain BL21(DE3)." evidence="4 5">
    <original>K</original>
    <variation>A</variation>
    <location>
        <position position="333"/>
    </location>
</feature>
<feature type="mutagenesis site" description="Abolishes transfer of phosphoethanolamine (PEA) to a lipid A analog in vitro. Almost abolishes resistance of E.coli strains Rosetta or TOP10 to colistin and polymyxin B, by comparison with the same strain expressing wild-type mcr-1. Does not affect expression or membrane localization in E.coli strain BL21(DE3)." evidence="4 5">
    <original>H</original>
    <variation>A</variation>
    <location>
        <position position="395"/>
    </location>
</feature>
<feature type="mutagenesis site" description="Abolishes transfer of phosphoethanolamine (PEA) to a lipid A analog in vitro. Almost abolishes resistance of E.coli strain Rosetta to colistin and polymyxin B, by comparison with the same strain expressing wild-type mcr-1. Does not affect expression or membrane localization in E.coli strain BL21(DE3)." evidence="5">
    <original>D</original>
    <variation>A</variation>
    <location>
        <position position="465"/>
    </location>
</feature>
<feature type="mutagenesis site" description="Abolishes transfer of phosphoethanolamine (PEA) to a lipid A analog in vitro. Almost abolishes resistance of E.coli strain Rosetta to colistin and polymyxin B, by comparison with the same strain expressing wild-type mcr-1. Does not affect expression or membrane localization in E.coli strain BL21(DE3)." evidence="5">
    <original>H</original>
    <variation>A</variation>
    <location>
        <position position="466"/>
    </location>
</feature>
<feature type="mutagenesis site" description="Reduces resistance of E.coli strain TOP10 to colistin, by comparison with the same strain expressing wild-type mcr-1." evidence="4">
    <original>E</original>
    <variation>A</variation>
    <location>
        <position position="468"/>
    </location>
</feature>
<feature type="mutagenesis site" description="Abolishes transfer of phosphoethanolamine (PEA) to a lipid A analog in vitro. Almost abolishes resistance of E.coli strains Rosetta or TOP10 to colistin and polymyxin B, by comparison with the same strain expressing wild-type mcr-1. Does not affect expression or membrane localization in E.coli strain BL21(DE3)." evidence="4 5">
    <original>H</original>
    <variation>A</variation>
    <location>
        <position position="478"/>
    </location>
</feature>
<feature type="strand" evidence="20">
    <location>
        <begin position="227"/>
        <end position="230"/>
    </location>
</feature>
<feature type="turn" evidence="20">
    <location>
        <begin position="232"/>
        <end position="234"/>
    </location>
</feature>
<feature type="strand" evidence="20">
    <location>
        <begin position="238"/>
        <end position="245"/>
    </location>
</feature>
<feature type="helix" evidence="20">
    <location>
        <begin position="250"/>
        <end position="252"/>
    </location>
</feature>
<feature type="helix" evidence="20">
    <location>
        <begin position="254"/>
        <end position="256"/>
    </location>
</feature>
<feature type="helix" evidence="20">
    <location>
        <begin position="264"/>
        <end position="267"/>
    </location>
</feature>
<feature type="strand" evidence="20">
    <location>
        <begin position="272"/>
        <end position="276"/>
    </location>
</feature>
<feature type="helix" evidence="20">
    <location>
        <begin position="285"/>
        <end position="292"/>
    </location>
</feature>
<feature type="helix" evidence="20">
    <location>
        <begin position="297"/>
        <end position="300"/>
    </location>
</feature>
<feature type="helix" evidence="20">
    <location>
        <begin position="303"/>
        <end position="308"/>
    </location>
</feature>
<feature type="helix" evidence="20">
    <location>
        <begin position="312"/>
        <end position="318"/>
    </location>
</feature>
<feature type="strand" evidence="20">
    <location>
        <begin position="322"/>
        <end position="330"/>
    </location>
</feature>
<feature type="turn" evidence="20">
    <location>
        <begin position="333"/>
        <end position="338"/>
    </location>
</feature>
<feature type="helix" evidence="20">
    <location>
        <begin position="341"/>
        <end position="343"/>
    </location>
</feature>
<feature type="strand" evidence="20">
    <location>
        <begin position="344"/>
        <end position="346"/>
    </location>
</feature>
<feature type="turn" evidence="20">
    <location>
        <begin position="350"/>
        <end position="352"/>
    </location>
</feature>
<feature type="strand" evidence="20">
    <location>
        <begin position="357"/>
        <end position="359"/>
    </location>
</feature>
<feature type="helix" evidence="20">
    <location>
        <begin position="366"/>
        <end position="370"/>
    </location>
</feature>
<feature type="helix" evidence="20">
    <location>
        <begin position="373"/>
        <end position="379"/>
    </location>
</feature>
<feature type="turn" evidence="20">
    <location>
        <begin position="380"/>
        <end position="382"/>
    </location>
</feature>
<feature type="strand" evidence="20">
    <location>
        <begin position="385"/>
        <end position="390"/>
    </location>
</feature>
<feature type="helix" evidence="20">
    <location>
        <begin position="399"/>
        <end position="402"/>
    </location>
</feature>
<feature type="helix" evidence="20">
    <location>
        <begin position="405"/>
        <end position="407"/>
    </location>
</feature>
<feature type="helix" evidence="20">
    <location>
        <begin position="419"/>
        <end position="421"/>
    </location>
</feature>
<feature type="helix" evidence="20">
    <location>
        <begin position="424"/>
        <end position="450"/>
    </location>
</feature>
<feature type="turn" evidence="20">
    <location>
        <begin position="451"/>
        <end position="455"/>
    </location>
</feature>
<feature type="strand" evidence="20">
    <location>
        <begin position="456"/>
        <end position="465"/>
    </location>
</feature>
<feature type="strand" evidence="20">
    <location>
        <begin position="469"/>
        <end position="471"/>
    </location>
</feature>
<feature type="helix" evidence="20">
    <location>
        <begin position="472"/>
        <end position="474"/>
    </location>
</feature>
<feature type="strand" evidence="20">
    <location>
        <begin position="476"/>
        <end position="478"/>
    </location>
</feature>
<feature type="turn" evidence="20">
    <location>
        <begin position="482"/>
        <end position="484"/>
    </location>
</feature>
<feature type="helix" evidence="20">
    <location>
        <begin position="487"/>
        <end position="489"/>
    </location>
</feature>
<feature type="strand" evidence="20">
    <location>
        <begin position="494"/>
        <end position="498"/>
    </location>
</feature>
<feature type="helix" evidence="20">
    <location>
        <begin position="500"/>
        <end position="502"/>
    </location>
</feature>
<feature type="helix" evidence="20">
    <location>
        <begin position="515"/>
        <end position="517"/>
    </location>
</feature>
<feature type="helix" evidence="20">
    <location>
        <begin position="518"/>
        <end position="525"/>
    </location>
</feature>
<feature type="helix" evidence="20">
    <location>
        <begin position="531"/>
        <end position="533"/>
    </location>
</feature>
<gene>
    <name type="primary">mcr1</name>
    <name evidence="6" type="synonym">mcr-1</name>
    <name type="ORF">APZ14_31440</name>
</gene>